<name>Y1307_STRGC</name>
<sequence length="244" mass="28471">MKILIPTAKELNTQVAQIEPESLSEKTKLIIRALSQYSVADLAQLYQIRPEKAKEEYQRIQKLQNETALTYPALYLFDGLMYRNIKRKNLTKEEEQYVQNHLLITSSLYGVIPALAPIAPHRLDFMTKLKVEKQSLKKLWTETYGQAVADQEILLSLLSSEFEEVFPKEVRDKMIRFKFMEEKDGKRKIHSTISKKARGQFLSYLIENHITKLSDIKQSSFSGFKFQENLSQEREFVFVKKVDG</sequence>
<organism>
    <name type="scientific">Streptococcus gordonii (strain Challis / ATCC 35105 / BCRC 15272 / CH1 / DL1 / V288)</name>
    <dbReference type="NCBI Taxonomy" id="467705"/>
    <lineage>
        <taxon>Bacteria</taxon>
        <taxon>Bacillati</taxon>
        <taxon>Bacillota</taxon>
        <taxon>Bacilli</taxon>
        <taxon>Lactobacillales</taxon>
        <taxon>Streptococcaceae</taxon>
        <taxon>Streptococcus</taxon>
    </lineage>
</organism>
<proteinExistence type="inferred from homology"/>
<gene>
    <name type="ordered locus">SGO_1307</name>
</gene>
<protein>
    <recommendedName>
        <fullName evidence="1">UPF0246 protein SGO_1307</fullName>
    </recommendedName>
</protein>
<evidence type="ECO:0000255" key="1">
    <source>
        <dbReference type="HAMAP-Rule" id="MF_00652"/>
    </source>
</evidence>
<feature type="chain" id="PRO_1000082781" description="UPF0246 protein SGO_1307">
    <location>
        <begin position="1"/>
        <end position="244"/>
    </location>
</feature>
<keyword id="KW-1185">Reference proteome</keyword>
<accession>A8AXS8</accession>
<comment type="similarity">
    <text evidence="1">Belongs to the UPF0246 family.</text>
</comment>
<dbReference type="EMBL" id="CP000725">
    <property type="protein sequence ID" value="ABV10649.1"/>
    <property type="molecule type" value="Genomic_DNA"/>
</dbReference>
<dbReference type="RefSeq" id="WP_012000696.1">
    <property type="nucleotide sequence ID" value="NC_009785.1"/>
</dbReference>
<dbReference type="SMR" id="A8AXS8"/>
<dbReference type="STRING" id="467705.SGO_1307"/>
<dbReference type="KEGG" id="sgo:SGO_1307"/>
<dbReference type="eggNOG" id="COG3022">
    <property type="taxonomic scope" value="Bacteria"/>
</dbReference>
<dbReference type="HOGENOM" id="CLU_061989_2_1_9"/>
<dbReference type="Proteomes" id="UP000001131">
    <property type="component" value="Chromosome"/>
</dbReference>
<dbReference type="GO" id="GO:0005829">
    <property type="term" value="C:cytosol"/>
    <property type="evidence" value="ECO:0007669"/>
    <property type="project" value="TreeGrafter"/>
</dbReference>
<dbReference type="GO" id="GO:0033194">
    <property type="term" value="P:response to hydroperoxide"/>
    <property type="evidence" value="ECO:0007669"/>
    <property type="project" value="TreeGrafter"/>
</dbReference>
<dbReference type="HAMAP" id="MF_00652">
    <property type="entry name" value="UPF0246"/>
    <property type="match status" value="1"/>
</dbReference>
<dbReference type="InterPro" id="IPR005583">
    <property type="entry name" value="YaaA"/>
</dbReference>
<dbReference type="NCBIfam" id="NF002543">
    <property type="entry name" value="PRK02101.1-4"/>
    <property type="match status" value="1"/>
</dbReference>
<dbReference type="PANTHER" id="PTHR30283:SF4">
    <property type="entry name" value="PEROXIDE STRESS RESISTANCE PROTEIN YAAA"/>
    <property type="match status" value="1"/>
</dbReference>
<dbReference type="PANTHER" id="PTHR30283">
    <property type="entry name" value="PEROXIDE STRESS RESPONSE PROTEIN YAAA"/>
    <property type="match status" value="1"/>
</dbReference>
<dbReference type="Pfam" id="PF03883">
    <property type="entry name" value="H2O2_YaaD"/>
    <property type="match status" value="1"/>
</dbReference>
<reference key="1">
    <citation type="journal article" date="2007" name="J. Bacteriol.">
        <title>Genome-wide transcriptional changes in Streptococcus gordonii in response to competence signaling peptide.</title>
        <authorList>
            <person name="Vickerman M.M."/>
            <person name="Iobst S."/>
            <person name="Jesionowski A.M."/>
            <person name="Gill S.R."/>
        </authorList>
    </citation>
    <scope>NUCLEOTIDE SEQUENCE [LARGE SCALE GENOMIC DNA]</scope>
    <source>
        <strain>Challis / ATCC 35105 / BCRC 15272 / CH1 / DL1 / V288</strain>
    </source>
</reference>